<dbReference type="EC" id="2.1.1.63"/>
<dbReference type="EMBL" id="CR382125">
    <property type="protein sequence ID" value="CAG99114.1"/>
    <property type="molecule type" value="Genomic_DNA"/>
</dbReference>
<dbReference type="RefSeq" id="XP_454027.1">
    <property type="nucleotide sequence ID" value="XM_454027.1"/>
</dbReference>
<dbReference type="SMR" id="Q6CPW2"/>
<dbReference type="FunCoup" id="Q6CPW2">
    <property type="interactions" value="63"/>
</dbReference>
<dbReference type="STRING" id="284590.Q6CPW2"/>
<dbReference type="PaxDb" id="284590-Q6CPW2"/>
<dbReference type="KEGG" id="kla:KLLA0_E01761g"/>
<dbReference type="eggNOG" id="KOG4062">
    <property type="taxonomic scope" value="Eukaryota"/>
</dbReference>
<dbReference type="HOGENOM" id="CLU_000445_52_2_1"/>
<dbReference type="InParanoid" id="Q6CPW2"/>
<dbReference type="OMA" id="YTFIETE"/>
<dbReference type="Proteomes" id="UP000000598">
    <property type="component" value="Chromosome E"/>
</dbReference>
<dbReference type="GO" id="GO:0005634">
    <property type="term" value="C:nucleus"/>
    <property type="evidence" value="ECO:0007669"/>
    <property type="project" value="UniProtKB-SubCell"/>
</dbReference>
<dbReference type="GO" id="GO:0003677">
    <property type="term" value="F:DNA binding"/>
    <property type="evidence" value="ECO:0007669"/>
    <property type="project" value="UniProtKB-KW"/>
</dbReference>
<dbReference type="GO" id="GO:0003908">
    <property type="term" value="F:methylated-DNA-[protein]-cysteine S-methyltransferase activity"/>
    <property type="evidence" value="ECO:0007669"/>
    <property type="project" value="UniProtKB-EC"/>
</dbReference>
<dbReference type="GO" id="GO:0006281">
    <property type="term" value="P:DNA repair"/>
    <property type="evidence" value="ECO:0007669"/>
    <property type="project" value="UniProtKB-KW"/>
</dbReference>
<dbReference type="GO" id="GO:0032259">
    <property type="term" value="P:methylation"/>
    <property type="evidence" value="ECO:0007669"/>
    <property type="project" value="UniProtKB-KW"/>
</dbReference>
<dbReference type="CDD" id="cd06445">
    <property type="entry name" value="ATase"/>
    <property type="match status" value="1"/>
</dbReference>
<dbReference type="FunFam" id="1.10.10.10:FF:000214">
    <property type="entry name" value="Methylated-DNA--protein-cysteine methyltransferase"/>
    <property type="match status" value="1"/>
</dbReference>
<dbReference type="Gene3D" id="1.10.10.10">
    <property type="entry name" value="Winged helix-like DNA-binding domain superfamily/Winged helix DNA-binding domain"/>
    <property type="match status" value="1"/>
</dbReference>
<dbReference type="InterPro" id="IPR001497">
    <property type="entry name" value="MethylDNA_cys_MeTrfase_AS"/>
</dbReference>
<dbReference type="InterPro" id="IPR014048">
    <property type="entry name" value="MethylDNA_cys_MeTrfase_DNA-bd"/>
</dbReference>
<dbReference type="InterPro" id="IPR036217">
    <property type="entry name" value="MethylDNA_cys_MeTrfase_DNAb"/>
</dbReference>
<dbReference type="InterPro" id="IPR036388">
    <property type="entry name" value="WH-like_DNA-bd_sf"/>
</dbReference>
<dbReference type="NCBIfam" id="TIGR00589">
    <property type="entry name" value="ogt"/>
    <property type="match status" value="1"/>
</dbReference>
<dbReference type="PANTHER" id="PTHR10815">
    <property type="entry name" value="METHYLATED-DNA--PROTEIN-CYSTEINE METHYLTRANSFERASE"/>
    <property type="match status" value="1"/>
</dbReference>
<dbReference type="PANTHER" id="PTHR10815:SF13">
    <property type="entry name" value="METHYLATED-DNA--PROTEIN-CYSTEINE METHYLTRANSFERASE"/>
    <property type="match status" value="1"/>
</dbReference>
<dbReference type="Pfam" id="PF01035">
    <property type="entry name" value="DNA_binding_1"/>
    <property type="match status" value="1"/>
</dbReference>
<dbReference type="SUPFAM" id="SSF46767">
    <property type="entry name" value="Methylated DNA-protein cysteine methyltransferase, C-terminal domain"/>
    <property type="match status" value="1"/>
</dbReference>
<dbReference type="PROSITE" id="PS00374">
    <property type="entry name" value="MGMT"/>
    <property type="match status" value="1"/>
</dbReference>
<accession>Q6CPW2</accession>
<evidence type="ECO:0000250" key="1"/>
<evidence type="ECO:0000255" key="2">
    <source>
        <dbReference type="PROSITE-ProRule" id="PRU10017"/>
    </source>
</evidence>
<evidence type="ECO:0000305" key="3"/>
<reference key="1">
    <citation type="journal article" date="2004" name="Nature">
        <title>Genome evolution in yeasts.</title>
        <authorList>
            <person name="Dujon B."/>
            <person name="Sherman D."/>
            <person name="Fischer G."/>
            <person name="Durrens P."/>
            <person name="Casaregola S."/>
            <person name="Lafontaine I."/>
            <person name="de Montigny J."/>
            <person name="Marck C."/>
            <person name="Neuveglise C."/>
            <person name="Talla E."/>
            <person name="Goffard N."/>
            <person name="Frangeul L."/>
            <person name="Aigle M."/>
            <person name="Anthouard V."/>
            <person name="Babour A."/>
            <person name="Barbe V."/>
            <person name="Barnay S."/>
            <person name="Blanchin S."/>
            <person name="Beckerich J.-M."/>
            <person name="Beyne E."/>
            <person name="Bleykasten C."/>
            <person name="Boisrame A."/>
            <person name="Boyer J."/>
            <person name="Cattolico L."/>
            <person name="Confanioleri F."/>
            <person name="de Daruvar A."/>
            <person name="Despons L."/>
            <person name="Fabre E."/>
            <person name="Fairhead C."/>
            <person name="Ferry-Dumazet H."/>
            <person name="Groppi A."/>
            <person name="Hantraye F."/>
            <person name="Hennequin C."/>
            <person name="Jauniaux N."/>
            <person name="Joyet P."/>
            <person name="Kachouri R."/>
            <person name="Kerrest A."/>
            <person name="Koszul R."/>
            <person name="Lemaire M."/>
            <person name="Lesur I."/>
            <person name="Ma L."/>
            <person name="Muller H."/>
            <person name="Nicaud J.-M."/>
            <person name="Nikolski M."/>
            <person name="Oztas S."/>
            <person name="Ozier-Kalogeropoulos O."/>
            <person name="Pellenz S."/>
            <person name="Potier S."/>
            <person name="Richard G.-F."/>
            <person name="Straub M.-L."/>
            <person name="Suleau A."/>
            <person name="Swennen D."/>
            <person name="Tekaia F."/>
            <person name="Wesolowski-Louvel M."/>
            <person name="Westhof E."/>
            <person name="Wirth B."/>
            <person name="Zeniou-Meyer M."/>
            <person name="Zivanovic Y."/>
            <person name="Bolotin-Fukuhara M."/>
            <person name="Thierry A."/>
            <person name="Bouchier C."/>
            <person name="Caudron B."/>
            <person name="Scarpelli C."/>
            <person name="Gaillardin C."/>
            <person name="Weissenbach J."/>
            <person name="Wincker P."/>
            <person name="Souciet J.-L."/>
        </authorList>
    </citation>
    <scope>NUCLEOTIDE SEQUENCE [LARGE SCALE GENOMIC DNA]</scope>
    <source>
        <strain>ATCC 8585 / CBS 2359 / DSM 70799 / NBRC 1267 / NRRL Y-1140 / WM37</strain>
    </source>
</reference>
<feature type="chain" id="PRO_0000333685" description="Methylated-DNA--protein-cysteine methyltransferase">
    <location>
        <begin position="1"/>
        <end position="189"/>
    </location>
</feature>
<feature type="active site" description="Nucleophile; methyl group acceptor" evidence="2">
    <location>
        <position position="159"/>
    </location>
</feature>
<feature type="binding site" evidence="1">
    <location>
        <position position="128"/>
    </location>
    <ligand>
        <name>DNA</name>
        <dbReference type="ChEBI" id="CHEBI:16991"/>
    </ligand>
</feature>
<feature type="binding site" evidence="1">
    <location>
        <position position="142"/>
    </location>
    <ligand>
        <name>DNA</name>
        <dbReference type="ChEBI" id="CHEBI:16991"/>
    </ligand>
</feature>
<feature type="binding site" evidence="1">
    <location>
        <position position="165"/>
    </location>
    <ligand>
        <name>DNA</name>
        <dbReference type="ChEBI" id="CHEBI:16991"/>
    </ligand>
</feature>
<organism>
    <name type="scientific">Kluyveromyces lactis (strain ATCC 8585 / CBS 2359 / DSM 70799 / NBRC 1267 / NRRL Y-1140 / WM37)</name>
    <name type="common">Yeast</name>
    <name type="synonym">Candida sphaerica</name>
    <dbReference type="NCBI Taxonomy" id="284590"/>
    <lineage>
        <taxon>Eukaryota</taxon>
        <taxon>Fungi</taxon>
        <taxon>Dikarya</taxon>
        <taxon>Ascomycota</taxon>
        <taxon>Saccharomycotina</taxon>
        <taxon>Saccharomycetes</taxon>
        <taxon>Saccharomycetales</taxon>
        <taxon>Saccharomycetaceae</taxon>
        <taxon>Kluyveromyces</taxon>
    </lineage>
</organism>
<sequence>MSHLLVYDFMEHDLANVLIVVKPSTKSLVFVSLSGTKPKLLGDAKKFVSKVNSLSKNKGSIYTLKNKSILKSDDVAWLEQLSFDFLQILAGGIDSQTNIKCEYLLGTEFQKKVWETTKTIKAGATISYQQLAVLLGNPKAVRAIGSALAKNNIAVVIPCHRIIGSKGKLTGFRWGIELKESLLRQEQAI</sequence>
<proteinExistence type="inferred from homology"/>
<gene>
    <name type="primary">MGT1</name>
    <name type="ordered locus">KLLA0E01760g</name>
</gene>
<name>MGMT_KLULA</name>
<protein>
    <recommendedName>
        <fullName>Methylated-DNA--protein-cysteine methyltransferase</fullName>
        <ecNumber>2.1.1.63</ecNumber>
    </recommendedName>
    <alternativeName>
        <fullName>6-O-methylguanine-DNA methyltransferase</fullName>
        <shortName>MGMT</shortName>
    </alternativeName>
    <alternativeName>
        <fullName>DNA repair MTase</fullName>
    </alternativeName>
    <alternativeName>
        <fullName>O-6-methylguanine-DNA-alkyltransferase</fullName>
    </alternativeName>
</protein>
<keyword id="KW-0227">DNA damage</keyword>
<keyword id="KW-0234">DNA repair</keyword>
<keyword id="KW-0238">DNA-binding</keyword>
<keyword id="KW-0489">Methyltransferase</keyword>
<keyword id="KW-0539">Nucleus</keyword>
<keyword id="KW-1185">Reference proteome</keyword>
<keyword id="KW-0808">Transferase</keyword>
<comment type="function">
    <text evidence="1">Involved in the cellular defense against the biological effects of O6-methylguanine (O6-MeG) and O4-methylthymine (O4-MeT) in DNA. Repairs the methylated nucleobase in DNA by stoichiometrically transferring the methyl group to a cysteine residue in the enzyme. This is a suicide reaction: the enzyme is irreversibly inactivated.</text>
</comment>
<comment type="catalytic activity">
    <reaction evidence="2">
        <text>a 6-O-methyl-2'-deoxyguanosine in DNA + L-cysteinyl-[protein] = S-methyl-L-cysteinyl-[protein] + a 2'-deoxyguanosine in DNA</text>
        <dbReference type="Rhea" id="RHEA:24000"/>
        <dbReference type="Rhea" id="RHEA-COMP:10131"/>
        <dbReference type="Rhea" id="RHEA-COMP:10132"/>
        <dbReference type="Rhea" id="RHEA-COMP:11367"/>
        <dbReference type="Rhea" id="RHEA-COMP:11368"/>
        <dbReference type="ChEBI" id="CHEBI:29950"/>
        <dbReference type="ChEBI" id="CHEBI:82612"/>
        <dbReference type="ChEBI" id="CHEBI:85445"/>
        <dbReference type="ChEBI" id="CHEBI:85448"/>
        <dbReference type="EC" id="2.1.1.63"/>
    </reaction>
</comment>
<comment type="catalytic activity">
    <reaction evidence="2">
        <text>a 4-O-methyl-thymidine in DNA + L-cysteinyl-[protein] = a thymidine in DNA + S-methyl-L-cysteinyl-[protein]</text>
        <dbReference type="Rhea" id="RHEA:53428"/>
        <dbReference type="Rhea" id="RHEA-COMP:10131"/>
        <dbReference type="Rhea" id="RHEA-COMP:10132"/>
        <dbReference type="Rhea" id="RHEA-COMP:13555"/>
        <dbReference type="Rhea" id="RHEA-COMP:13556"/>
        <dbReference type="ChEBI" id="CHEBI:29950"/>
        <dbReference type="ChEBI" id="CHEBI:82612"/>
        <dbReference type="ChEBI" id="CHEBI:137386"/>
        <dbReference type="ChEBI" id="CHEBI:137387"/>
        <dbReference type="EC" id="2.1.1.63"/>
    </reaction>
</comment>
<comment type="subcellular location">
    <subcellularLocation>
        <location evidence="1">Nucleus</location>
    </subcellularLocation>
</comment>
<comment type="miscellaneous">
    <text>This enzyme catalyzes only one turnover and therefore is not strictly catalytic. According to one definition, an enzyme is a biocatalyst that acts repeatedly and over many reaction cycles.</text>
</comment>
<comment type="similarity">
    <text evidence="3">Belongs to the MGMT family.</text>
</comment>